<organism>
    <name type="scientific">Drosophila melanogaster</name>
    <name type="common">Fruit fly</name>
    <dbReference type="NCBI Taxonomy" id="7227"/>
    <lineage>
        <taxon>Eukaryota</taxon>
        <taxon>Metazoa</taxon>
        <taxon>Ecdysozoa</taxon>
        <taxon>Arthropoda</taxon>
        <taxon>Hexapoda</taxon>
        <taxon>Insecta</taxon>
        <taxon>Pterygota</taxon>
        <taxon>Neoptera</taxon>
        <taxon>Endopterygota</taxon>
        <taxon>Diptera</taxon>
        <taxon>Brachycera</taxon>
        <taxon>Muscomorpha</taxon>
        <taxon>Ephydroidea</taxon>
        <taxon>Drosophilidae</taxon>
        <taxon>Drosophila</taxon>
        <taxon>Sophophora</taxon>
    </lineage>
</organism>
<proteinExistence type="evidence at protein level"/>
<protein>
    <recommendedName>
        <fullName>Moesin/ezrin/radixin homolog 1</fullName>
        <shortName>Ezrin-moesin-radixin 1</shortName>
    </recommendedName>
    <alternativeName>
        <fullName>Moesin</fullName>
        <shortName>dMoesin</shortName>
    </alternativeName>
    <alternativeName>
        <fullName>Protein D17</fullName>
    </alternativeName>
</protein>
<evidence type="ECO:0000250" key="1">
    <source>
        <dbReference type="UniProtKB" id="P26041"/>
    </source>
</evidence>
<evidence type="ECO:0000255" key="2">
    <source>
        <dbReference type="PROSITE-ProRule" id="PRU00084"/>
    </source>
</evidence>
<evidence type="ECO:0000256" key="3">
    <source>
        <dbReference type="SAM" id="MobiDB-lite"/>
    </source>
</evidence>
<evidence type="ECO:0000269" key="4">
    <source>
    </source>
</evidence>
<evidence type="ECO:0000269" key="5">
    <source>
    </source>
</evidence>
<evidence type="ECO:0000269" key="6">
    <source>
    </source>
</evidence>
<evidence type="ECO:0000269" key="7">
    <source>
    </source>
</evidence>
<evidence type="ECO:0000269" key="8">
    <source>
    </source>
</evidence>
<evidence type="ECO:0000269" key="9">
    <source>
    </source>
</evidence>
<evidence type="ECO:0000303" key="10">
    <source>
    </source>
</evidence>
<evidence type="ECO:0000303" key="11">
    <source>
    </source>
</evidence>
<evidence type="ECO:0000305" key="12"/>
<sequence length="578" mass="68141">MSPKALNVRVTTMDAELEFAIQSTTTGKQLFDQVVKTIGLREVWFFGLQYTDSKGDSTWIKLYKKVMNQDVKKENPLQFRFRAKFYPEDVAEELIQDITLRLFYLQVKNAILTDEIYCPPETSVLLASYAVQARHGDHNKTTHTAGFLANDRLLPQRVIDQHKMSKDEWEQSIMTWWQEHRSMLREDAMMEYLKIAQDLEMYGVNYFEIRNKKGTDLWLGVDALGLNIYEQDDRLTPKIGFPWSEIRNISFSEKKFIIKPIDKKAPDFMFFAPRVRINKRILALCMGNHELYMRRRKPDTIDVQQMKAQAREEKNAKQQEREKLQLALAARERAEKKQQEYEDRLKQMQEDMERSQRDLLEAQDMIRRLEEQLKQLQAAKDELELRQKELQAMLQRLEEAKNMEAVEKLKLEEEIMAKQMEVQRIQDEVNAKDEETKRLQDEVEDARRKQVIAAEAAAALLAASTTPQHHHVAEDENENEEELTNGDAGGDVSRDLDTDEHIKDPIEDRRTLAERNERLHDQLKALKQDLAQSRDETKETANDKIHRENVRQGRDKYKTLREIRKGNTKRRVDQFENM</sequence>
<dbReference type="EMBL" id="L38909">
    <property type="protein sequence ID" value="AAB48934.1"/>
    <property type="molecule type" value="mRNA"/>
</dbReference>
<dbReference type="EMBL" id="AE014298">
    <property type="protein sequence ID" value="AAF46415.2"/>
    <property type="molecule type" value="Genomic_DNA"/>
</dbReference>
<dbReference type="EMBL" id="AE014298">
    <property type="protein sequence ID" value="AAF46416.1"/>
    <property type="molecule type" value="Genomic_DNA"/>
</dbReference>
<dbReference type="EMBL" id="AE014298">
    <property type="protein sequence ID" value="AAF46417.1"/>
    <property type="molecule type" value="Genomic_DNA"/>
</dbReference>
<dbReference type="EMBL" id="AE014298">
    <property type="protein sequence ID" value="AAF46418.1"/>
    <property type="molecule type" value="Genomic_DNA"/>
</dbReference>
<dbReference type="EMBL" id="AE014298">
    <property type="protein sequence ID" value="AAS65294.1"/>
    <property type="molecule type" value="Genomic_DNA"/>
</dbReference>
<dbReference type="EMBL" id="AE014298">
    <property type="protein sequence ID" value="AAS65295.1"/>
    <property type="molecule type" value="Genomic_DNA"/>
</dbReference>
<dbReference type="EMBL" id="AE014298">
    <property type="protein sequence ID" value="AAS65296.1"/>
    <property type="molecule type" value="Genomic_DNA"/>
</dbReference>
<dbReference type="EMBL" id="AE014298">
    <property type="protein sequence ID" value="AAS65297.1"/>
    <property type="molecule type" value="Genomic_DNA"/>
</dbReference>
<dbReference type="EMBL" id="AE014298">
    <property type="protein sequence ID" value="AAS65298.1"/>
    <property type="molecule type" value="Genomic_DNA"/>
</dbReference>
<dbReference type="EMBL" id="AE014298">
    <property type="protein sequence ID" value="AAS65299.1"/>
    <property type="molecule type" value="Genomic_DNA"/>
</dbReference>
<dbReference type="EMBL" id="AY069855">
    <property type="protein sequence ID" value="AAL40000.1"/>
    <property type="molecule type" value="mRNA"/>
</dbReference>
<dbReference type="EMBL" id="U23798">
    <property type="protein sequence ID" value="AAA65059.1"/>
    <property type="molecule type" value="mRNA"/>
</dbReference>
<dbReference type="EMBL" id="U08218">
    <property type="protein sequence ID" value="AAA19857.1"/>
    <property type="molecule type" value="mRNA"/>
</dbReference>
<dbReference type="RefSeq" id="NP_001245584.1">
    <molecule id="P46150-1"/>
    <property type="nucleotide sequence ID" value="NM_001258655.1"/>
</dbReference>
<dbReference type="RefSeq" id="NP_525082.2">
    <molecule id="P46150-2"/>
    <property type="nucleotide sequence ID" value="NM_080343.4"/>
</dbReference>
<dbReference type="RefSeq" id="NP_727290.1">
    <molecule id="P46150-4"/>
    <property type="nucleotide sequence ID" value="NM_167168.4"/>
</dbReference>
<dbReference type="RefSeq" id="NP_727291.1">
    <molecule id="P46150-3"/>
    <property type="nucleotide sequence ID" value="NM_167169.2"/>
</dbReference>
<dbReference type="RefSeq" id="NP_727292.1">
    <molecule id="P46150-5"/>
    <property type="nucleotide sequence ID" value="NM_167170.2"/>
</dbReference>
<dbReference type="RefSeq" id="NP_996387.1">
    <molecule id="P46150-1"/>
    <property type="nucleotide sequence ID" value="NM_206664.3"/>
</dbReference>
<dbReference type="RefSeq" id="NP_996388.1">
    <molecule id="P46150-2"/>
    <property type="nucleotide sequence ID" value="NM_206665.3"/>
</dbReference>
<dbReference type="RefSeq" id="NP_996389.1">
    <molecule id="P46150-2"/>
    <property type="nucleotide sequence ID" value="NM_206666.3"/>
</dbReference>
<dbReference type="RefSeq" id="NP_996390.1">
    <molecule id="P46150-2"/>
    <property type="nucleotide sequence ID" value="NM_206667.3"/>
</dbReference>
<dbReference type="RefSeq" id="NP_996391.1">
    <molecule id="P46150-2"/>
    <property type="nucleotide sequence ID" value="NM_206668.3"/>
</dbReference>
<dbReference type="RefSeq" id="NP_996392.1">
    <molecule id="P46150-2"/>
    <property type="nucleotide sequence ID" value="NM_206669.2"/>
</dbReference>
<dbReference type="SMR" id="P46150"/>
<dbReference type="BioGRID" id="58274">
    <property type="interactions" value="146"/>
</dbReference>
<dbReference type="DIP" id="DIP-52150N"/>
<dbReference type="FunCoup" id="P46150">
    <property type="interactions" value="797"/>
</dbReference>
<dbReference type="IntAct" id="P46150">
    <property type="interactions" value="190"/>
</dbReference>
<dbReference type="STRING" id="7227.FBpp0071213"/>
<dbReference type="TCDB" id="8.A.25.1.4">
    <property type="family name" value="the ezrin/radixin/moesin (ezrin) family"/>
</dbReference>
<dbReference type="iPTMnet" id="P46150"/>
<dbReference type="PaxDb" id="7227-FBpp0071213"/>
<dbReference type="EnsemblMetazoa" id="FBtr0071269">
    <molecule id="P46150-2"/>
    <property type="protein sequence ID" value="FBpp0071212"/>
    <property type="gene ID" value="FBgn0011661"/>
</dbReference>
<dbReference type="EnsemblMetazoa" id="FBtr0071270">
    <molecule id="P46150-4"/>
    <property type="protein sequence ID" value="FBpp0071213"/>
    <property type="gene ID" value="FBgn0011661"/>
</dbReference>
<dbReference type="EnsemblMetazoa" id="FBtr0071271">
    <molecule id="P46150-3"/>
    <property type="protein sequence ID" value="FBpp0071214"/>
    <property type="gene ID" value="FBgn0011661"/>
</dbReference>
<dbReference type="EnsemblMetazoa" id="FBtr0071272">
    <molecule id="P46150-5"/>
    <property type="protein sequence ID" value="FBpp0071215"/>
    <property type="gene ID" value="FBgn0011661"/>
</dbReference>
<dbReference type="EnsemblMetazoa" id="FBtr0071273">
    <molecule id="P46150-2"/>
    <property type="protein sequence ID" value="FBpp0089231"/>
    <property type="gene ID" value="FBgn0011661"/>
</dbReference>
<dbReference type="EnsemblMetazoa" id="FBtr0071274">
    <molecule id="P46150-2"/>
    <property type="protein sequence ID" value="FBpp0089232"/>
    <property type="gene ID" value="FBgn0011661"/>
</dbReference>
<dbReference type="EnsemblMetazoa" id="FBtr0071275">
    <molecule id="P46150-2"/>
    <property type="protein sequence ID" value="FBpp0089233"/>
    <property type="gene ID" value="FBgn0011661"/>
</dbReference>
<dbReference type="EnsemblMetazoa" id="FBtr0071276">
    <molecule id="P46150-2"/>
    <property type="protein sequence ID" value="FBpp0089234"/>
    <property type="gene ID" value="FBgn0011661"/>
</dbReference>
<dbReference type="EnsemblMetazoa" id="FBtr0071277">
    <molecule id="P46150-2"/>
    <property type="protein sequence ID" value="FBpp0089235"/>
    <property type="gene ID" value="FBgn0011661"/>
</dbReference>
<dbReference type="EnsemblMetazoa" id="FBtr0071278">
    <molecule id="P46150-1"/>
    <property type="protein sequence ID" value="FBpp0089236"/>
    <property type="gene ID" value="FBgn0011661"/>
</dbReference>
<dbReference type="EnsemblMetazoa" id="FBtr0308194">
    <molecule id="P46150-1"/>
    <property type="protein sequence ID" value="FBpp0300514"/>
    <property type="gene ID" value="FBgn0011661"/>
</dbReference>
<dbReference type="GeneID" id="31816"/>
<dbReference type="KEGG" id="dme:Dmel_CG10701"/>
<dbReference type="UCSC" id="CG10701-RA">
    <property type="organism name" value="d. melanogaster"/>
</dbReference>
<dbReference type="UCSC" id="CG10701-RB">
    <property type="organism name" value="d. melanogaster"/>
</dbReference>
<dbReference type="UCSC" id="CG10701-RC">
    <property type="organism name" value="d. melanogaster"/>
</dbReference>
<dbReference type="UCSC" id="CG10701-RE">
    <property type="organism name" value="d. melanogaster"/>
</dbReference>
<dbReference type="AGR" id="FB:FBgn0011661"/>
<dbReference type="CTD" id="31816"/>
<dbReference type="FlyBase" id="FBgn0011661">
    <property type="gene designation" value="Moe"/>
</dbReference>
<dbReference type="VEuPathDB" id="VectorBase:FBgn0011661"/>
<dbReference type="eggNOG" id="KOG3529">
    <property type="taxonomic scope" value="Eukaryota"/>
</dbReference>
<dbReference type="GeneTree" id="ENSGT01090000260082"/>
<dbReference type="InParanoid" id="P46150"/>
<dbReference type="OMA" id="DMKTQET"/>
<dbReference type="OrthoDB" id="6018897at2759"/>
<dbReference type="PhylomeDB" id="P46150"/>
<dbReference type="Reactome" id="R-DME-373752">
    <property type="pathway name" value="Netrin-1 signaling"/>
</dbReference>
<dbReference type="SignaLink" id="P46150"/>
<dbReference type="BioGRID-ORCS" id="31816">
    <property type="hits" value="0 hits in 3 CRISPR screens"/>
</dbReference>
<dbReference type="CD-CODE" id="2838EF58">
    <property type="entry name" value="Centrosome"/>
</dbReference>
<dbReference type="ChiTaRS" id="Moe">
    <property type="organism name" value="fly"/>
</dbReference>
<dbReference type="GenomeRNAi" id="31816"/>
<dbReference type="PRO" id="PR:P46150"/>
<dbReference type="Proteomes" id="UP000000803">
    <property type="component" value="Chromosome X"/>
</dbReference>
<dbReference type="Bgee" id="FBgn0011661">
    <property type="expression patterns" value="Expressed in embryonic/larval hemocyte (Drosophila) and 302 other cell types or tissues"/>
</dbReference>
<dbReference type="ExpressionAtlas" id="P46150">
    <property type="expression patterns" value="baseline and differential"/>
</dbReference>
<dbReference type="GO" id="GO:0005912">
    <property type="term" value="C:adherens junction"/>
    <property type="evidence" value="ECO:0000314"/>
    <property type="project" value="UniProtKB"/>
</dbReference>
<dbReference type="GO" id="GO:0045177">
    <property type="term" value="C:apical part of cell"/>
    <property type="evidence" value="ECO:0000318"/>
    <property type="project" value="GO_Central"/>
</dbReference>
<dbReference type="GO" id="GO:0016324">
    <property type="term" value="C:apical plasma membrane"/>
    <property type="evidence" value="ECO:0000314"/>
    <property type="project" value="FlyBase"/>
</dbReference>
<dbReference type="GO" id="GO:0005938">
    <property type="term" value="C:cell cortex"/>
    <property type="evidence" value="ECO:0000314"/>
    <property type="project" value="FlyBase"/>
</dbReference>
<dbReference type="GO" id="GO:0032154">
    <property type="term" value="C:cleavage furrow"/>
    <property type="evidence" value="ECO:0000314"/>
    <property type="project" value="FlyBase"/>
</dbReference>
<dbReference type="GO" id="GO:0005737">
    <property type="term" value="C:cytoplasm"/>
    <property type="evidence" value="ECO:0000314"/>
    <property type="project" value="UniProtKB"/>
</dbReference>
<dbReference type="GO" id="GO:0098592">
    <property type="term" value="C:cytoplasmic side of apical plasma membrane"/>
    <property type="evidence" value="ECO:0000314"/>
    <property type="project" value="FlyBase"/>
</dbReference>
<dbReference type="GO" id="GO:0005829">
    <property type="term" value="C:cytosol"/>
    <property type="evidence" value="ECO:0000314"/>
    <property type="project" value="UniProtKB"/>
</dbReference>
<dbReference type="GO" id="GO:0000791">
    <property type="term" value="C:euchromatin"/>
    <property type="evidence" value="ECO:0000314"/>
    <property type="project" value="UniProtKB"/>
</dbReference>
<dbReference type="GO" id="GO:0031234">
    <property type="term" value="C:extrinsic component of cytoplasmic side of plasma membrane"/>
    <property type="evidence" value="ECO:0000314"/>
    <property type="project" value="FlyBase"/>
</dbReference>
<dbReference type="GO" id="GO:0030175">
    <property type="term" value="C:filopodium"/>
    <property type="evidence" value="ECO:0000318"/>
    <property type="project" value="GO_Central"/>
</dbReference>
<dbReference type="GO" id="GO:0005902">
    <property type="term" value="C:microvillus"/>
    <property type="evidence" value="ECO:0000318"/>
    <property type="project" value="GO_Central"/>
</dbReference>
<dbReference type="GO" id="GO:1990023">
    <property type="term" value="C:mitotic spindle midzone"/>
    <property type="evidence" value="ECO:0000314"/>
    <property type="project" value="FlyBase"/>
</dbReference>
<dbReference type="GO" id="GO:0031514">
    <property type="term" value="C:motile cilium"/>
    <property type="evidence" value="ECO:0007669"/>
    <property type="project" value="UniProtKB-SubCell"/>
</dbReference>
<dbReference type="GO" id="GO:0005654">
    <property type="term" value="C:nucleoplasm"/>
    <property type="evidence" value="ECO:0007669"/>
    <property type="project" value="UniProtKB-SubCell"/>
</dbReference>
<dbReference type="GO" id="GO:0005634">
    <property type="term" value="C:nucleus"/>
    <property type="evidence" value="ECO:0000314"/>
    <property type="project" value="UniProtKB"/>
</dbReference>
<dbReference type="GO" id="GO:0005886">
    <property type="term" value="C:plasma membrane"/>
    <property type="evidence" value="ECO:0000314"/>
    <property type="project" value="UniProtKB"/>
</dbReference>
<dbReference type="GO" id="GO:0005703">
    <property type="term" value="C:polytene chromosome puff"/>
    <property type="evidence" value="ECO:0000314"/>
    <property type="project" value="UniProtKB"/>
</dbReference>
<dbReference type="GO" id="GO:0016028">
    <property type="term" value="C:rhabdomere"/>
    <property type="evidence" value="ECO:0000314"/>
    <property type="project" value="FlyBase"/>
</dbReference>
<dbReference type="GO" id="GO:0035003">
    <property type="term" value="C:subapical complex"/>
    <property type="evidence" value="ECO:0000304"/>
    <property type="project" value="FlyBase"/>
</dbReference>
<dbReference type="GO" id="GO:0003779">
    <property type="term" value="F:actin binding"/>
    <property type="evidence" value="ECO:0000314"/>
    <property type="project" value="UniProtKB"/>
</dbReference>
<dbReference type="GO" id="GO:0050839">
    <property type="term" value="F:cell adhesion molecule binding"/>
    <property type="evidence" value="ECO:0000318"/>
    <property type="project" value="GO_Central"/>
</dbReference>
<dbReference type="GO" id="GO:0008017">
    <property type="term" value="F:microtubule binding"/>
    <property type="evidence" value="ECO:0000315"/>
    <property type="project" value="UniProtKB"/>
</dbReference>
<dbReference type="GO" id="GO:0005546">
    <property type="term" value="F:phosphatidylinositol-4,5-bisphosphate binding"/>
    <property type="evidence" value="ECO:0000314"/>
    <property type="project" value="FlyBase"/>
</dbReference>
<dbReference type="GO" id="GO:0030036">
    <property type="term" value="P:actin cytoskeleton organization"/>
    <property type="evidence" value="ECO:0000315"/>
    <property type="project" value="FlyBase"/>
</dbReference>
<dbReference type="GO" id="GO:0030029">
    <property type="term" value="P:actin filament-based process"/>
    <property type="evidence" value="ECO:0000303"/>
    <property type="project" value="FlyBase"/>
</dbReference>
<dbReference type="GO" id="GO:0009952">
    <property type="term" value="P:anterior/posterior pattern specification"/>
    <property type="evidence" value="ECO:0000304"/>
    <property type="project" value="FlyBase"/>
</dbReference>
<dbReference type="GO" id="GO:0060446">
    <property type="term" value="P:branching involved in open tracheal system development"/>
    <property type="evidence" value="ECO:0000315"/>
    <property type="project" value="FlyBase"/>
</dbReference>
<dbReference type="GO" id="GO:0030866">
    <property type="term" value="P:cortical actin cytoskeleton organization"/>
    <property type="evidence" value="ECO:0000315"/>
    <property type="project" value="FlyBase"/>
</dbReference>
<dbReference type="GO" id="GO:0043622">
    <property type="term" value="P:cortical microtubule organization"/>
    <property type="evidence" value="ECO:0000315"/>
    <property type="project" value="UniProtKB"/>
</dbReference>
<dbReference type="GO" id="GO:0007010">
    <property type="term" value="P:cytoskeleton organization"/>
    <property type="evidence" value="ECO:0000304"/>
    <property type="project" value="FlyBase"/>
</dbReference>
<dbReference type="GO" id="GO:0007368">
    <property type="term" value="P:determination of left/right symmetry"/>
    <property type="evidence" value="ECO:0000315"/>
    <property type="project" value="FlyBase"/>
</dbReference>
<dbReference type="GO" id="GO:0010669">
    <property type="term" value="P:epithelial structure maintenance"/>
    <property type="evidence" value="ECO:0000315"/>
    <property type="project" value="FlyBase"/>
</dbReference>
<dbReference type="GO" id="GO:0035088">
    <property type="term" value="P:establishment or maintenance of apical/basal cell polarity"/>
    <property type="evidence" value="ECO:0000304"/>
    <property type="project" value="FlyBase"/>
</dbReference>
<dbReference type="GO" id="GO:0045197">
    <property type="term" value="P:establishment or maintenance of epithelial cell apical/basal polarity"/>
    <property type="evidence" value="ECO:0000314"/>
    <property type="project" value="UniProtKB"/>
</dbReference>
<dbReference type="GO" id="GO:0016336">
    <property type="term" value="P:establishment or maintenance of polarity of larval imaginal disc epithelium"/>
    <property type="evidence" value="ECO:0000315"/>
    <property type="project" value="FlyBase"/>
</dbReference>
<dbReference type="GO" id="GO:0042462">
    <property type="term" value="P:eye photoreceptor cell development"/>
    <property type="evidence" value="ECO:0000304"/>
    <property type="project" value="FlyBase"/>
</dbReference>
<dbReference type="GO" id="GO:0035149">
    <property type="term" value="P:lumen formation, open tracheal system"/>
    <property type="evidence" value="ECO:0000315"/>
    <property type="project" value="FlyBase"/>
</dbReference>
<dbReference type="GO" id="GO:0034453">
    <property type="term" value="P:microtubule anchoring"/>
    <property type="evidence" value="ECO:0000315"/>
    <property type="project" value="UniProtKB"/>
</dbReference>
<dbReference type="GO" id="GO:0002009">
    <property type="term" value="P:morphogenesis of an epithelium"/>
    <property type="evidence" value="ECO:0000304"/>
    <property type="project" value="FlyBase"/>
</dbReference>
<dbReference type="GO" id="GO:0007314">
    <property type="term" value="P:oocyte anterior/posterior axis specification"/>
    <property type="evidence" value="ECO:0000315"/>
    <property type="project" value="FlyBase"/>
</dbReference>
<dbReference type="GO" id="GO:0072499">
    <property type="term" value="P:photoreceptor cell axon guidance"/>
    <property type="evidence" value="ECO:0000315"/>
    <property type="project" value="FlyBase"/>
</dbReference>
<dbReference type="GO" id="GO:0007315">
    <property type="term" value="P:pole plasm assembly"/>
    <property type="evidence" value="ECO:0000304"/>
    <property type="project" value="FlyBase"/>
</dbReference>
<dbReference type="GO" id="GO:0007318">
    <property type="term" value="P:pole plasm protein localization"/>
    <property type="evidence" value="ECO:0000304"/>
    <property type="project" value="FlyBase"/>
</dbReference>
<dbReference type="GO" id="GO:0008284">
    <property type="term" value="P:positive regulation of cell population proliferation"/>
    <property type="evidence" value="ECO:0000316"/>
    <property type="project" value="FlyBase"/>
</dbReference>
<dbReference type="GO" id="GO:2000643">
    <property type="term" value="P:positive regulation of early endosome to late endosome transport"/>
    <property type="evidence" value="ECO:0000318"/>
    <property type="project" value="GO_Central"/>
</dbReference>
<dbReference type="GO" id="GO:0045807">
    <property type="term" value="P:positive regulation of endocytosis"/>
    <property type="evidence" value="ECO:0000315"/>
    <property type="project" value="FlyBase"/>
</dbReference>
<dbReference type="GO" id="GO:1902846">
    <property type="term" value="P:positive regulation of mitotic spindle elongation"/>
    <property type="evidence" value="ECO:0000315"/>
    <property type="project" value="UniProtKB"/>
</dbReference>
<dbReference type="GO" id="GO:1902966">
    <property type="term" value="P:positive regulation of protein localization to early endosome"/>
    <property type="evidence" value="ECO:0000318"/>
    <property type="project" value="GO_Central"/>
</dbReference>
<dbReference type="GO" id="GO:0008104">
    <property type="term" value="P:protein localization"/>
    <property type="evidence" value="ECO:0000304"/>
    <property type="project" value="FlyBase"/>
</dbReference>
<dbReference type="GO" id="GO:1990146">
    <property type="term" value="P:protein localization to rhabdomere"/>
    <property type="evidence" value="ECO:0000315"/>
    <property type="project" value="FlyBase"/>
</dbReference>
<dbReference type="GO" id="GO:0032956">
    <property type="term" value="P:regulation of actin cytoskeleton organization"/>
    <property type="evidence" value="ECO:0000315"/>
    <property type="project" value="FlyBase"/>
</dbReference>
<dbReference type="GO" id="GO:0008360">
    <property type="term" value="P:regulation of cell shape"/>
    <property type="evidence" value="ECO:0000315"/>
    <property type="project" value="UniProtKB"/>
</dbReference>
<dbReference type="GO" id="GO:0016057">
    <property type="term" value="P:regulation of membrane potential in photoreceptor cell"/>
    <property type="evidence" value="ECO:0000314"/>
    <property type="project" value="FlyBase"/>
</dbReference>
<dbReference type="GO" id="GO:1902115">
    <property type="term" value="P:regulation of organelle assembly"/>
    <property type="evidence" value="ECO:0000318"/>
    <property type="project" value="GO_Central"/>
</dbReference>
<dbReference type="GO" id="GO:0042052">
    <property type="term" value="P:rhabdomere development"/>
    <property type="evidence" value="ECO:0000315"/>
    <property type="project" value="FlyBase"/>
</dbReference>
<dbReference type="GO" id="GO:0045313">
    <property type="term" value="P:rhabdomere membrane biogenesis"/>
    <property type="evidence" value="ECO:0000315"/>
    <property type="project" value="FlyBase"/>
</dbReference>
<dbReference type="GO" id="GO:0006405">
    <property type="term" value="P:RNA export from nucleus"/>
    <property type="evidence" value="ECO:0000315"/>
    <property type="project" value="UniProtKB"/>
</dbReference>
<dbReference type="CDD" id="cd14473">
    <property type="entry name" value="FERM_B-lobe"/>
    <property type="match status" value="1"/>
</dbReference>
<dbReference type="CDD" id="cd13194">
    <property type="entry name" value="FERM_C_ERM"/>
    <property type="match status" value="1"/>
</dbReference>
<dbReference type="CDD" id="cd17187">
    <property type="entry name" value="FERM_F1_ERM"/>
    <property type="match status" value="1"/>
</dbReference>
<dbReference type="FunFam" id="2.30.29.30:FF:000003">
    <property type="entry name" value="Radixin isoform 1"/>
    <property type="match status" value="1"/>
</dbReference>
<dbReference type="FunFam" id="1.20.80.10:FF:000002">
    <property type="entry name" value="radixin isoform X1"/>
    <property type="match status" value="1"/>
</dbReference>
<dbReference type="FunFam" id="3.10.20.90:FF:000013">
    <property type="entry name" value="radixin isoform X1"/>
    <property type="match status" value="1"/>
</dbReference>
<dbReference type="FunFam" id="1.20.5.450:FF:000001">
    <property type="entry name" value="radixin isoform X2"/>
    <property type="match status" value="1"/>
</dbReference>
<dbReference type="Gene3D" id="1.20.5.450">
    <property type="match status" value="1"/>
</dbReference>
<dbReference type="Gene3D" id="1.20.80.10">
    <property type="match status" value="1"/>
</dbReference>
<dbReference type="Gene3D" id="6.10.360.10">
    <property type="match status" value="1"/>
</dbReference>
<dbReference type="Gene3D" id="3.10.20.90">
    <property type="entry name" value="Phosphatidylinositol 3-kinase Catalytic Subunit, Chain A, domain 1"/>
    <property type="match status" value="1"/>
</dbReference>
<dbReference type="Gene3D" id="2.30.29.30">
    <property type="entry name" value="Pleckstrin-homology domain (PH domain)/Phosphotyrosine-binding domain (PTB)"/>
    <property type="match status" value="1"/>
</dbReference>
<dbReference type="InterPro" id="IPR019749">
    <property type="entry name" value="Band_41_domain"/>
</dbReference>
<dbReference type="InterPro" id="IPR011174">
    <property type="entry name" value="ERM"/>
</dbReference>
<dbReference type="InterPro" id="IPR011259">
    <property type="entry name" value="ERM_C_dom"/>
</dbReference>
<dbReference type="InterPro" id="IPR041789">
    <property type="entry name" value="ERM_FERM_C"/>
</dbReference>
<dbReference type="InterPro" id="IPR046810">
    <property type="entry name" value="ERM_helical"/>
</dbReference>
<dbReference type="InterPro" id="IPR000798">
    <property type="entry name" value="Ez/rad/moesin-like"/>
</dbReference>
<dbReference type="InterPro" id="IPR014352">
    <property type="entry name" value="FERM/acyl-CoA-bd_prot_sf"/>
</dbReference>
<dbReference type="InterPro" id="IPR035963">
    <property type="entry name" value="FERM_2"/>
</dbReference>
<dbReference type="InterPro" id="IPR019748">
    <property type="entry name" value="FERM_central"/>
</dbReference>
<dbReference type="InterPro" id="IPR019747">
    <property type="entry name" value="FERM_CS"/>
</dbReference>
<dbReference type="InterPro" id="IPR000299">
    <property type="entry name" value="FERM_domain"/>
</dbReference>
<dbReference type="InterPro" id="IPR018979">
    <property type="entry name" value="FERM_N"/>
</dbReference>
<dbReference type="InterPro" id="IPR018980">
    <property type="entry name" value="FERM_PH-like_C"/>
</dbReference>
<dbReference type="InterPro" id="IPR008954">
    <property type="entry name" value="Moesin_tail_sf"/>
</dbReference>
<dbReference type="InterPro" id="IPR011993">
    <property type="entry name" value="PH-like_dom_sf"/>
</dbReference>
<dbReference type="InterPro" id="IPR029071">
    <property type="entry name" value="Ubiquitin-like_domsf"/>
</dbReference>
<dbReference type="PANTHER" id="PTHR23281">
    <property type="entry name" value="MERLIN/MOESIN/EZRIN/RADIXIN"/>
    <property type="match status" value="1"/>
</dbReference>
<dbReference type="Pfam" id="PF00769">
    <property type="entry name" value="ERM_C"/>
    <property type="match status" value="1"/>
</dbReference>
<dbReference type="Pfam" id="PF20492">
    <property type="entry name" value="ERM_helical"/>
    <property type="match status" value="1"/>
</dbReference>
<dbReference type="Pfam" id="PF09380">
    <property type="entry name" value="FERM_C"/>
    <property type="match status" value="1"/>
</dbReference>
<dbReference type="Pfam" id="PF00373">
    <property type="entry name" value="FERM_M"/>
    <property type="match status" value="1"/>
</dbReference>
<dbReference type="Pfam" id="PF09379">
    <property type="entry name" value="FERM_N"/>
    <property type="match status" value="1"/>
</dbReference>
<dbReference type="PIRSF" id="PIRSF002305">
    <property type="entry name" value="ERM"/>
    <property type="match status" value="1"/>
</dbReference>
<dbReference type="PRINTS" id="PR00935">
    <property type="entry name" value="BAND41"/>
</dbReference>
<dbReference type="PRINTS" id="PR00661">
    <property type="entry name" value="ERMFAMILY"/>
</dbReference>
<dbReference type="SMART" id="SM00295">
    <property type="entry name" value="B41"/>
    <property type="match status" value="1"/>
</dbReference>
<dbReference type="SMART" id="SM01196">
    <property type="entry name" value="FERM_C"/>
    <property type="match status" value="1"/>
</dbReference>
<dbReference type="SUPFAM" id="SSF48678">
    <property type="entry name" value="Moesin tail domain"/>
    <property type="match status" value="1"/>
</dbReference>
<dbReference type="SUPFAM" id="SSF50729">
    <property type="entry name" value="PH domain-like"/>
    <property type="match status" value="1"/>
</dbReference>
<dbReference type="SUPFAM" id="SSF47031">
    <property type="entry name" value="Second domain of FERM"/>
    <property type="match status" value="1"/>
</dbReference>
<dbReference type="SUPFAM" id="SSF54236">
    <property type="entry name" value="Ubiquitin-like"/>
    <property type="match status" value="1"/>
</dbReference>
<dbReference type="PROSITE" id="PS00660">
    <property type="entry name" value="FERM_1"/>
    <property type="match status" value="1"/>
</dbReference>
<dbReference type="PROSITE" id="PS00661">
    <property type="entry name" value="FERM_2"/>
    <property type="match status" value="1"/>
</dbReference>
<dbReference type="PROSITE" id="PS50057">
    <property type="entry name" value="FERM_3"/>
    <property type="match status" value="1"/>
</dbReference>
<feature type="chain" id="PRO_0000219425" description="Moesin/ezrin/radixin homolog 1">
    <location>
        <begin position="1"/>
        <end position="578"/>
    </location>
</feature>
<feature type="domain" description="FERM" evidence="2">
    <location>
        <begin position="1"/>
        <end position="296"/>
    </location>
</feature>
<feature type="region of interest" description="Disordered" evidence="3">
    <location>
        <begin position="463"/>
        <end position="555"/>
    </location>
</feature>
<feature type="compositionally biased region" description="Acidic residues" evidence="3">
    <location>
        <begin position="475"/>
        <end position="484"/>
    </location>
</feature>
<feature type="compositionally biased region" description="Basic and acidic residues" evidence="3">
    <location>
        <begin position="492"/>
        <end position="555"/>
    </location>
</feature>
<feature type="modified residue" description="Phosphothreonine" evidence="4">
    <location>
        <position position="559"/>
    </location>
</feature>
<feature type="splice variant" id="VSP_035863" description="In isoform C." evidence="12">
    <location>
        <begin position="1"/>
        <end position="66"/>
    </location>
</feature>
<feature type="splice variant" id="VSP_035864" description="In isoform A." evidence="12">
    <original>SPKA</original>
    <variation>GVNFLLFFFSIWL</variation>
    <location>
        <begin position="2"/>
        <end position="5"/>
    </location>
</feature>
<feature type="splice variant" id="VSP_035865" description="In isoform B." evidence="12">
    <original>SPKA</original>
    <variation>VVVSDSRVRLPRYGGVSVKRKT</variation>
    <location>
        <begin position="2"/>
        <end position="5"/>
    </location>
</feature>
<feature type="splice variant" id="VSP_035866" description="In isoform A and isoform B." evidence="12">
    <original>K</original>
    <variation>KPESPAIKTIKYLKRVKKYVDKKTADSNGVNHLETSEEDDDADDMTGSMPFSTW</variation>
    <location>
        <position position="65"/>
    </location>
</feature>
<feature type="splice variant" id="VSP_007499" description="In isoform D." evidence="10 11">
    <location>
        <begin position="451"/>
        <end position="453"/>
    </location>
</feature>
<feature type="sequence conflict" description="In Ref. 6; AAA65059." evidence="12" ref="6">
    <original>LWL</original>
    <variation>SLV</variation>
    <location>
        <begin position="217"/>
        <end position="219"/>
    </location>
</feature>
<comment type="function">
    <text evidence="6 8 9">Involved in connections of major cytoskeletal structures to the plasma membrane (PubMed:8666669). Together with wgn, involved in control of axon targeting of R8 and R2-R5 photoreceptors, independent of egr (PubMed:23544124). In the nucleus, recruited to sites of active transcription by RNA polymerase II where it has a role in nuclear mRNA export together with the mRNA export factor PCID2 and other messenger ribonucleoprotein (mRNP) particles (PubMed:28554770).</text>
</comment>
<comment type="subunit">
    <text evidence="6 8 9">Interacts with wgn (PubMed:23544124). Interacts with Mer and arm at the adherens junction (PubMed:8666669). Interacts with cytoskeletal actin at apical buds of microvilli in the precellularised embryo (PubMed:8666669). Interacts with PCID2 (possibly via FERM domain) (PubMed:28554770).</text>
</comment>
<comment type="interaction">
    <interactant intactId="EBI-206130">
        <id>P46150</id>
    </interactant>
    <interactant intactId="EBI-194381">
        <id>Q8T0G4</id>
        <label>conu</label>
    </interactant>
    <organismsDiffer>false</organismsDiffer>
    <experiments>6</experiments>
</comment>
<comment type="interaction">
    <interactant intactId="EBI-206152">
        <id>P46150-2</id>
    </interactant>
    <interactant intactId="EBI-2890448">
        <id>Q6XK19</id>
        <label>btsz</label>
    </interactant>
    <organismsDiffer>false</organismsDiffer>
    <experiments>3</experiments>
</comment>
<comment type="subcellular location">
    <subcellularLocation>
        <location evidence="9">Cell junction</location>
        <location evidence="9">Adherens junction</location>
    </subcellularLocation>
    <subcellularLocation>
        <location evidence="9">Cell projection</location>
        <location evidence="9">Microvillus</location>
    </subcellularLocation>
    <subcellularLocation>
        <location evidence="9">Cell projection</location>
        <location evidence="9">Rhabdomere</location>
    </subcellularLocation>
    <subcellularLocation>
        <location evidence="1">Cell membrane</location>
        <topology evidence="1">Peripheral membrane protein</topology>
        <orientation evidence="1">Cytoplasmic side</orientation>
    </subcellularLocation>
    <subcellularLocation>
        <location evidence="1">Cytoplasm</location>
        <location evidence="1">Cytoskeleton</location>
    </subcellularLocation>
    <subcellularLocation>
        <location evidence="8">Cytoplasm</location>
    </subcellularLocation>
    <subcellularLocation>
        <location evidence="7">Cytoplasm</location>
        <location evidence="7">Cell cortex</location>
    </subcellularLocation>
    <subcellularLocation>
        <location evidence="5">Cell projection</location>
        <location evidence="5">Cilium</location>
        <location evidence="5">Flagellum</location>
    </subcellularLocation>
    <subcellularLocation>
        <location evidence="8">Nucleus</location>
        <location evidence="8">Nucleoplasm</location>
    </subcellularLocation>
    <subcellularLocation>
        <location evidence="8">Chromosome</location>
    </subcellularLocation>
    <text evidence="5 7 8">Nuclear localization is dependent on Nup98 and Rae1. Associated with the active ecdysone-regulated loci on polytene chromosomes and heat shock-induced puffs. Colocalizes with messenger ribonucleoprotein (mRNP) particles probably through interaction with the mRNA export factor PCID2 (PubMed:28554770). Localizes to the apical cell cortex of follicular epithelium cells when phosphorylated on Thr-559 (PubMed:24768049). Localizes to ring canal structures at the growing end of elongating spermatid cysts when phosphorylated on Thr-559 (PubMed:20237161).</text>
</comment>
<comment type="alternative products">
    <event type="alternative splicing"/>
    <isoform>
        <id>P46150-1</id>
        <name>J</name>
        <sequence type="displayed"/>
    </isoform>
    <isoform>
        <id>P46150-3</id>
        <name>A</name>
        <sequence type="described" ref="VSP_035864 VSP_035866"/>
    </isoform>
    <isoform>
        <id>P46150-4</id>
        <name>B</name>
        <sequence type="described" ref="VSP_035865 VSP_035866"/>
    </isoform>
    <isoform>
        <id>P46150-5</id>
        <name>C</name>
        <sequence type="described" ref="VSP_035863"/>
    </isoform>
    <isoform>
        <id>P46150-2</id>
        <name>D</name>
        <name>E</name>
        <name>F</name>
        <name>G</name>
        <name>H</name>
        <name>I</name>
        <sequence type="described" ref="VSP_007499"/>
    </isoform>
</comment>
<comment type="developmental stage">
    <text evidence="5 7 8 9">Expressed in the salivary glands of third instar larvae (at protein level) (PubMed:28554770). Expressed in follicular epithelium and oocyte in late stage 9/10 of oogenesis (at protein level) (PubMed:24768049). Expressed in elongating spermatid cysts during spermatogenesis (at protein level) (PubMed:20237161). Expressed in apical and basolateral ends of follicular epithelium during oogenesis (PubMed:8666669). In embryonic CNS, expression is seen in the neuropil, developing brain and neuronal cell bodies (PubMed:8666669). In embryonic PNS, expression is seen at the cell membrane (PubMed:8666669). In third instar larvae, eye imaginal disk expression is seen at the membranes of developing photoreceptors posterior to the morphogenetic furrow (PubMed:8666669). In pupal eyes, expression is at the membrane of cone cells, secondary and tertiary pigment cells, bristle precursor cells and rhabdomeres (PubMed:8666669).</text>
</comment>
<comment type="PTM">
    <text evidence="4">Phosphorylated on Thr-559 (PubMed:18948416). In the oocyte this phosphorylation is induced by phosphatidylinositol 4,5-bisphosphate (PtdIns[4,5]P(2)) generated by sktl (PubMed:18948416).</text>
</comment>
<keyword id="KW-0009">Actin-binding</keyword>
<keyword id="KW-0025">Alternative splicing</keyword>
<keyword id="KW-0965">Cell junction</keyword>
<keyword id="KW-1003">Cell membrane</keyword>
<keyword id="KW-0966">Cell projection</keyword>
<keyword id="KW-0158">Chromosome</keyword>
<keyword id="KW-0969">Cilium</keyword>
<keyword id="KW-0963">Cytoplasm</keyword>
<keyword id="KW-0206">Cytoskeleton</keyword>
<keyword id="KW-0282">Flagellum</keyword>
<keyword id="KW-0472">Membrane</keyword>
<keyword id="KW-0524">Neurogenesis</keyword>
<keyword id="KW-0539">Nucleus</keyword>
<keyword id="KW-0597">Phosphoprotein</keyword>
<keyword id="KW-1185">Reference proteome</keyword>
<gene>
    <name type="primary">Moe</name>
    <name type="synonym">EMR1</name>
    <name type="ORF">CG10701</name>
</gene>
<reference key="1">
    <citation type="journal article" date="1996" name="J. Cell Biol.">
        <title>Distinct cellular and subcellular patterns of expression imply distinct functions for the Drosophila homologues of moesin and the neurofibromatosis 2 tumor suppressor, merlin.</title>
        <authorList>
            <person name="McCartney B.M."/>
            <person name="Fehon R.G."/>
        </authorList>
    </citation>
    <scope>NUCLEOTIDE SEQUENCE [MRNA] (ISOFORM J)</scope>
    <scope>FUNCTION</scope>
    <scope>SUBUNIT</scope>
    <scope>SUBCELLULAR LOCATION</scope>
    <scope>DEVELOPMENTAL STAGE</scope>
    <source>
        <strain>Oregon-R</strain>
        <tissue>Embryo</tissue>
    </source>
</reference>
<reference key="2">
    <citation type="submission" date="1997-03" db="EMBL/GenBank/DDBJ databases">
        <authorList>
            <person name="Fehon R.G."/>
        </authorList>
    </citation>
    <scope>SEQUENCE REVISION TO 183-184</scope>
</reference>
<reference key="3">
    <citation type="journal article" date="2000" name="Science">
        <title>The genome sequence of Drosophila melanogaster.</title>
        <authorList>
            <person name="Adams M.D."/>
            <person name="Celniker S.E."/>
            <person name="Holt R.A."/>
            <person name="Evans C.A."/>
            <person name="Gocayne J.D."/>
            <person name="Amanatides P.G."/>
            <person name="Scherer S.E."/>
            <person name="Li P.W."/>
            <person name="Hoskins R.A."/>
            <person name="Galle R.F."/>
            <person name="George R.A."/>
            <person name="Lewis S.E."/>
            <person name="Richards S."/>
            <person name="Ashburner M."/>
            <person name="Henderson S.N."/>
            <person name="Sutton G.G."/>
            <person name="Wortman J.R."/>
            <person name="Yandell M.D."/>
            <person name="Zhang Q."/>
            <person name="Chen L.X."/>
            <person name="Brandon R.C."/>
            <person name="Rogers Y.-H.C."/>
            <person name="Blazej R.G."/>
            <person name="Champe M."/>
            <person name="Pfeiffer B.D."/>
            <person name="Wan K.H."/>
            <person name="Doyle C."/>
            <person name="Baxter E.G."/>
            <person name="Helt G."/>
            <person name="Nelson C.R."/>
            <person name="Miklos G.L.G."/>
            <person name="Abril J.F."/>
            <person name="Agbayani A."/>
            <person name="An H.-J."/>
            <person name="Andrews-Pfannkoch C."/>
            <person name="Baldwin D."/>
            <person name="Ballew R.M."/>
            <person name="Basu A."/>
            <person name="Baxendale J."/>
            <person name="Bayraktaroglu L."/>
            <person name="Beasley E.M."/>
            <person name="Beeson K.Y."/>
            <person name="Benos P.V."/>
            <person name="Berman B.P."/>
            <person name="Bhandari D."/>
            <person name="Bolshakov S."/>
            <person name="Borkova D."/>
            <person name="Botchan M.R."/>
            <person name="Bouck J."/>
            <person name="Brokstein P."/>
            <person name="Brottier P."/>
            <person name="Burtis K.C."/>
            <person name="Busam D.A."/>
            <person name="Butler H."/>
            <person name="Cadieu E."/>
            <person name="Center A."/>
            <person name="Chandra I."/>
            <person name="Cherry J.M."/>
            <person name="Cawley S."/>
            <person name="Dahlke C."/>
            <person name="Davenport L.B."/>
            <person name="Davies P."/>
            <person name="de Pablos B."/>
            <person name="Delcher A."/>
            <person name="Deng Z."/>
            <person name="Mays A.D."/>
            <person name="Dew I."/>
            <person name="Dietz S.M."/>
            <person name="Dodson K."/>
            <person name="Doup L.E."/>
            <person name="Downes M."/>
            <person name="Dugan-Rocha S."/>
            <person name="Dunkov B.C."/>
            <person name="Dunn P."/>
            <person name="Durbin K.J."/>
            <person name="Evangelista C.C."/>
            <person name="Ferraz C."/>
            <person name="Ferriera S."/>
            <person name="Fleischmann W."/>
            <person name="Fosler C."/>
            <person name="Gabrielian A.E."/>
            <person name="Garg N.S."/>
            <person name="Gelbart W.M."/>
            <person name="Glasser K."/>
            <person name="Glodek A."/>
            <person name="Gong F."/>
            <person name="Gorrell J.H."/>
            <person name="Gu Z."/>
            <person name="Guan P."/>
            <person name="Harris M."/>
            <person name="Harris N.L."/>
            <person name="Harvey D.A."/>
            <person name="Heiman T.J."/>
            <person name="Hernandez J.R."/>
            <person name="Houck J."/>
            <person name="Hostin D."/>
            <person name="Houston K.A."/>
            <person name="Howland T.J."/>
            <person name="Wei M.-H."/>
            <person name="Ibegwam C."/>
            <person name="Jalali M."/>
            <person name="Kalush F."/>
            <person name="Karpen G.H."/>
            <person name="Ke Z."/>
            <person name="Kennison J.A."/>
            <person name="Ketchum K.A."/>
            <person name="Kimmel B.E."/>
            <person name="Kodira C.D."/>
            <person name="Kraft C.L."/>
            <person name="Kravitz S."/>
            <person name="Kulp D."/>
            <person name="Lai Z."/>
            <person name="Lasko P."/>
            <person name="Lei Y."/>
            <person name="Levitsky A.A."/>
            <person name="Li J.H."/>
            <person name="Li Z."/>
            <person name="Liang Y."/>
            <person name="Lin X."/>
            <person name="Liu X."/>
            <person name="Mattei B."/>
            <person name="McIntosh T.C."/>
            <person name="McLeod M.P."/>
            <person name="McPherson D."/>
            <person name="Merkulov G."/>
            <person name="Milshina N.V."/>
            <person name="Mobarry C."/>
            <person name="Morris J."/>
            <person name="Moshrefi A."/>
            <person name="Mount S.M."/>
            <person name="Moy M."/>
            <person name="Murphy B."/>
            <person name="Murphy L."/>
            <person name="Muzny D.M."/>
            <person name="Nelson D.L."/>
            <person name="Nelson D.R."/>
            <person name="Nelson K.A."/>
            <person name="Nixon K."/>
            <person name="Nusskern D.R."/>
            <person name="Pacleb J.M."/>
            <person name="Palazzolo M."/>
            <person name="Pittman G.S."/>
            <person name="Pan S."/>
            <person name="Pollard J."/>
            <person name="Puri V."/>
            <person name="Reese M.G."/>
            <person name="Reinert K."/>
            <person name="Remington K."/>
            <person name="Saunders R.D.C."/>
            <person name="Scheeler F."/>
            <person name="Shen H."/>
            <person name="Shue B.C."/>
            <person name="Siden-Kiamos I."/>
            <person name="Simpson M."/>
            <person name="Skupski M.P."/>
            <person name="Smith T.J."/>
            <person name="Spier E."/>
            <person name="Spradling A.C."/>
            <person name="Stapleton M."/>
            <person name="Strong R."/>
            <person name="Sun E."/>
            <person name="Svirskas R."/>
            <person name="Tector C."/>
            <person name="Turner R."/>
            <person name="Venter E."/>
            <person name="Wang A.H."/>
            <person name="Wang X."/>
            <person name="Wang Z.-Y."/>
            <person name="Wassarman D.A."/>
            <person name="Weinstock G.M."/>
            <person name="Weissenbach J."/>
            <person name="Williams S.M."/>
            <person name="Woodage T."/>
            <person name="Worley K.C."/>
            <person name="Wu D."/>
            <person name="Yang S."/>
            <person name="Yao Q.A."/>
            <person name="Ye J."/>
            <person name="Yeh R.-F."/>
            <person name="Zaveri J.S."/>
            <person name="Zhan M."/>
            <person name="Zhang G."/>
            <person name="Zhao Q."/>
            <person name="Zheng L."/>
            <person name="Zheng X.H."/>
            <person name="Zhong F.N."/>
            <person name="Zhong W."/>
            <person name="Zhou X."/>
            <person name="Zhu S.C."/>
            <person name="Zhu X."/>
            <person name="Smith H.O."/>
            <person name="Gibbs R.A."/>
            <person name="Myers E.W."/>
            <person name="Rubin G.M."/>
            <person name="Venter J.C."/>
        </authorList>
    </citation>
    <scope>NUCLEOTIDE SEQUENCE [LARGE SCALE GENOMIC DNA]</scope>
    <source>
        <strain>Berkeley</strain>
    </source>
</reference>
<reference key="4">
    <citation type="journal article" date="2002" name="Genome Biol.">
        <title>Annotation of the Drosophila melanogaster euchromatic genome: a systematic review.</title>
        <authorList>
            <person name="Misra S."/>
            <person name="Crosby M.A."/>
            <person name="Mungall C.J."/>
            <person name="Matthews B.B."/>
            <person name="Campbell K.S."/>
            <person name="Hradecky P."/>
            <person name="Huang Y."/>
            <person name="Kaminker J.S."/>
            <person name="Millburn G.H."/>
            <person name="Prochnik S.E."/>
            <person name="Smith C.D."/>
            <person name="Tupy J.L."/>
            <person name="Whitfield E.J."/>
            <person name="Bayraktaroglu L."/>
            <person name="Berman B.P."/>
            <person name="Bettencourt B.R."/>
            <person name="Celniker S.E."/>
            <person name="de Grey A.D.N.J."/>
            <person name="Drysdale R.A."/>
            <person name="Harris N.L."/>
            <person name="Richter J."/>
            <person name="Russo S."/>
            <person name="Schroeder A.J."/>
            <person name="Shu S.Q."/>
            <person name="Stapleton M."/>
            <person name="Yamada C."/>
            <person name="Ashburner M."/>
            <person name="Gelbart W.M."/>
            <person name="Rubin G.M."/>
            <person name="Lewis S.E."/>
        </authorList>
    </citation>
    <scope>GENOME REANNOTATION</scope>
    <scope>ALTERNATIVE SPLICING</scope>
    <source>
        <strain>Berkeley</strain>
    </source>
</reference>
<reference key="5">
    <citation type="journal article" date="2002" name="Genome Biol.">
        <title>A Drosophila full-length cDNA resource.</title>
        <authorList>
            <person name="Stapleton M."/>
            <person name="Carlson J.W."/>
            <person name="Brokstein P."/>
            <person name="Yu C."/>
            <person name="Champe M."/>
            <person name="George R.A."/>
            <person name="Guarin H."/>
            <person name="Kronmiller B."/>
            <person name="Pacleb J.M."/>
            <person name="Park S."/>
            <person name="Wan K.H."/>
            <person name="Rubin G.M."/>
            <person name="Celniker S.E."/>
        </authorList>
    </citation>
    <scope>NUCLEOTIDE SEQUENCE [LARGE SCALE MRNA] (ISOFORM D)</scope>
    <source>
        <strain>Berkeley</strain>
        <tissue>Embryo</tissue>
    </source>
</reference>
<reference key="6">
    <citation type="submission" date="1995-03" db="EMBL/GenBank/DDBJ databases">
        <authorList>
            <person name="Winge P."/>
            <person name="Fleming J.T."/>
            <person name="Gobel V."/>
        </authorList>
    </citation>
    <scope>NUCLEOTIDE SEQUENCE [MRNA] OF 208-296</scope>
    <source>
        <tissue>Embryo</tissue>
    </source>
</reference>
<reference key="7">
    <citation type="journal article" date="1994" name="Proc. Natl. Acad. Sci. U.S.A.">
        <title>Identification of Drosophila cytoskeletal proteins by induction of abnormal cell shape in fission yeast.</title>
        <authorList>
            <person name="Edwards K.A."/>
            <person name="Montague R.A."/>
            <person name="Shepard S."/>
            <person name="Edgar B.A."/>
            <person name="Erikson R.L."/>
            <person name="Kiehart D.P."/>
        </authorList>
    </citation>
    <scope>NUCLEOTIDE SEQUENCE [MRNA] OF 256-578 (ISOFORM D)</scope>
    <source>
        <tissue>Embryo</tissue>
    </source>
</reference>
<reference key="8">
    <citation type="journal article" date="2008" name="Development">
        <title>PIP5K-dependent production of PIP2 sustains microtubule organization to establish polarized transport in the Drosophila oocyte.</title>
        <authorList>
            <person name="Gervais L."/>
            <person name="Claret S."/>
            <person name="Januschke J."/>
            <person name="Roth S."/>
            <person name="Guichet A."/>
        </authorList>
    </citation>
    <scope>PHOSPHORYLATION AT THR-559</scope>
</reference>
<reference key="9">
    <citation type="journal article" date="2010" name="Mol. Biol. Cell">
        <title>Phosphatidylinositol 4,5-bisphosphate directs spermatid cell polarity and exocyst localization in Drosophila.</title>
        <authorList>
            <person name="Fabian L."/>
            <person name="Wei H.C."/>
            <person name="Rollins J."/>
            <person name="Noguchi T."/>
            <person name="Blankenship J.T."/>
            <person name="Bellamkonda K."/>
            <person name="Polevoy G."/>
            <person name="Gervais L."/>
            <person name="Guichet A."/>
            <person name="Fuller M.T."/>
            <person name="Brill J.A."/>
        </authorList>
    </citation>
    <scope>SUBCELLULAR LOCATION</scope>
    <scope>DEVELOPMENTAL STAGE</scope>
</reference>
<reference key="10">
    <citation type="journal article" date="2013" name="PLoS ONE">
        <title>Wengen, the sole tumour necrosis factor receptor in Drosophila, collaborates with moesin to control photoreceptor axon targeting during development.</title>
        <authorList>
            <person name="Ruan W."/>
            <person name="Unsain N."/>
            <person name="Desbarats J."/>
            <person name="Fon E.A."/>
            <person name="Barker P.A."/>
        </authorList>
    </citation>
    <scope>FUNCTION</scope>
    <scope>INTERACTION WITH WGN</scope>
</reference>
<reference key="11">
    <citation type="journal article" date="2014" name="Curr. Biol.">
        <title>PI(4,5)P2 produced by the PI4P5K SKTL controls apical size by tethering PAR-3 in Drosophila epithelial cells.</title>
        <authorList>
            <person name="Claret S."/>
            <person name="Jouette J."/>
            <person name="Benoit B."/>
            <person name="Legent K."/>
            <person name="Guichet A."/>
        </authorList>
    </citation>
    <scope>SUBCELLULAR LOCATION</scope>
    <scope>DEVELOPMENTAL STAGE</scope>
</reference>
<reference key="12">
    <citation type="journal article" date="2017" name="Biochim. Biophys. Acta">
        <title>The actin binding cytoskeletal protein Moesin is involved in nuclear mRNA export.</title>
        <authorList>
            <person name="Kristo I."/>
            <person name="Bajusz C."/>
            <person name="Borsos B.N."/>
            <person name="Pankotai T."/>
            <person name="Dopie J."/>
            <person name="Jankovics F."/>
            <person name="Vartiainen M.K."/>
            <person name="Erdelyi M."/>
            <person name="Vilmos P."/>
        </authorList>
    </citation>
    <scope>FUNCTION</scope>
    <scope>INTERACTION WITH PCID2</scope>
    <scope>SUBCELLULAR LOCATION</scope>
    <scope>DEVELOPMENTAL STAGE</scope>
</reference>
<name>MOEH_DROME</name>
<accession>P46150</accession>
<accession>A4V458</accession>
<accession>P91930</accession>
<accession>Q24053</accession>
<accession>Q24435</accession>
<accession>Q7KVS6</accession>
<accession>Q7KVS7</accession>
<accession>Q9W3B4</accession>
<accession>Q9W3B5</accession>
<accession>Q9W3B6</accession>
<accession>Q9W3B7</accession>